<protein>
    <recommendedName>
        <fullName evidence="3">Uncharacterized protein UMODL1-AS1</fullName>
    </recommendedName>
    <alternativeName>
        <fullName evidence="3">UMODL1 antisense RNA 1</fullName>
    </alternativeName>
    <alternativeName>
        <fullName evidence="2">UMODL1 antisense gene protein 1</fullName>
    </alternativeName>
</protein>
<proteinExistence type="evidence at protein level"/>
<sequence>MAWGLPCHQNTAGANPHLFLGCYSTSSLQGLEYGGQRGDAHGKPGVLHGELEPHDHTSRLERHDLHSQLPTSVQVRHHWWEGALDLAKKRQQQTSINVFTTIKQGSRCDRWMVLGAISLLYNQEEAPDDRPLRARREVRSQHLSWAFPGTAGPGLVCAGDSQ</sequence>
<dbReference type="EMBL" id="AK090790">
    <property type="protein sequence ID" value="BAC03519.1"/>
    <property type="molecule type" value="mRNA"/>
</dbReference>
<dbReference type="EMBL" id="AP001621">
    <property type="status" value="NOT_ANNOTATED_CDS"/>
    <property type="molecule type" value="Genomic_DNA"/>
</dbReference>
<dbReference type="EMBL" id="BC063412">
    <property type="status" value="NOT_ANNOTATED_CDS"/>
    <property type="molecule type" value="mRNA"/>
</dbReference>
<dbReference type="SMR" id="Q8N2C9"/>
<dbReference type="BioMuta" id="HGNC:23821"/>
<dbReference type="MassIVE" id="Q8N2C9"/>
<dbReference type="AGR" id="HGNC:23821"/>
<dbReference type="GeneCards" id="UMODL1-AS1"/>
<dbReference type="HGNC" id="HGNC:23821">
    <property type="gene designation" value="UMODL1-AS1"/>
</dbReference>
<dbReference type="neXtProt" id="NX_Q8N2C9"/>
<dbReference type="InParanoid" id="Q8N2C9"/>
<dbReference type="PAN-GO" id="Q8N2C9">
    <property type="GO annotations" value="0 GO annotations based on evolutionary models"/>
</dbReference>
<dbReference type="PhylomeDB" id="Q8N2C9"/>
<dbReference type="TreeFam" id="TF353703"/>
<dbReference type="ChiTaRS" id="UMODL1-AS1">
    <property type="organism name" value="human"/>
</dbReference>
<dbReference type="Pharos" id="Q8N2C9">
    <property type="development level" value="Tdark"/>
</dbReference>
<dbReference type="PRO" id="PR:Q8N2C9"/>
<dbReference type="Proteomes" id="UP000005640">
    <property type="component" value="Unplaced"/>
</dbReference>
<dbReference type="RNAct" id="Q8N2C9">
    <property type="molecule type" value="protein"/>
</dbReference>
<keyword id="KW-1267">Proteomics identification</keyword>
<keyword id="KW-1185">Reference proteome</keyword>
<feature type="chain" id="PRO_0000079555" description="Uncharacterized protein UMODL1-AS1">
    <location>
        <begin position="1"/>
        <end position="162"/>
    </location>
</feature>
<feature type="sequence variant" id="VAR_017941" description="In dbSNP:rs220111." evidence="1">
    <original>V</original>
    <variation>F</variation>
    <location>
        <position position="98"/>
    </location>
</feature>
<gene>
    <name evidence="3" type="primary">UMODL1-AS1</name>
    <name evidence="3" type="synonym">C21orf128</name>
</gene>
<name>UMAS1_HUMAN</name>
<accession>Q8N2C9</accession>
<organism>
    <name type="scientific">Homo sapiens</name>
    <name type="common">Human</name>
    <dbReference type="NCBI Taxonomy" id="9606"/>
    <lineage>
        <taxon>Eukaryota</taxon>
        <taxon>Metazoa</taxon>
        <taxon>Chordata</taxon>
        <taxon>Craniata</taxon>
        <taxon>Vertebrata</taxon>
        <taxon>Euteleostomi</taxon>
        <taxon>Mammalia</taxon>
        <taxon>Eutheria</taxon>
        <taxon>Euarchontoglires</taxon>
        <taxon>Primates</taxon>
        <taxon>Haplorrhini</taxon>
        <taxon>Catarrhini</taxon>
        <taxon>Hominidae</taxon>
        <taxon>Homo</taxon>
    </lineage>
</organism>
<reference key="1">
    <citation type="journal article" date="2004" name="Nat. Genet.">
        <title>Complete sequencing and characterization of 21,243 full-length human cDNAs.</title>
        <authorList>
            <person name="Ota T."/>
            <person name="Suzuki Y."/>
            <person name="Nishikawa T."/>
            <person name="Otsuki T."/>
            <person name="Sugiyama T."/>
            <person name="Irie R."/>
            <person name="Wakamatsu A."/>
            <person name="Hayashi K."/>
            <person name="Sato H."/>
            <person name="Nagai K."/>
            <person name="Kimura K."/>
            <person name="Makita H."/>
            <person name="Sekine M."/>
            <person name="Obayashi M."/>
            <person name="Nishi T."/>
            <person name="Shibahara T."/>
            <person name="Tanaka T."/>
            <person name="Ishii S."/>
            <person name="Yamamoto J."/>
            <person name="Saito K."/>
            <person name="Kawai Y."/>
            <person name="Isono Y."/>
            <person name="Nakamura Y."/>
            <person name="Nagahari K."/>
            <person name="Murakami K."/>
            <person name="Yasuda T."/>
            <person name="Iwayanagi T."/>
            <person name="Wagatsuma M."/>
            <person name="Shiratori A."/>
            <person name="Sudo H."/>
            <person name="Hosoiri T."/>
            <person name="Kaku Y."/>
            <person name="Kodaira H."/>
            <person name="Kondo H."/>
            <person name="Sugawara M."/>
            <person name="Takahashi M."/>
            <person name="Kanda K."/>
            <person name="Yokoi T."/>
            <person name="Furuya T."/>
            <person name="Kikkawa E."/>
            <person name="Omura Y."/>
            <person name="Abe K."/>
            <person name="Kamihara K."/>
            <person name="Katsuta N."/>
            <person name="Sato K."/>
            <person name="Tanikawa M."/>
            <person name="Yamazaki M."/>
            <person name="Ninomiya K."/>
            <person name="Ishibashi T."/>
            <person name="Yamashita H."/>
            <person name="Murakawa K."/>
            <person name="Fujimori K."/>
            <person name="Tanai H."/>
            <person name="Kimata M."/>
            <person name="Watanabe M."/>
            <person name="Hiraoka S."/>
            <person name="Chiba Y."/>
            <person name="Ishida S."/>
            <person name="Ono Y."/>
            <person name="Takiguchi S."/>
            <person name="Watanabe S."/>
            <person name="Yosida M."/>
            <person name="Hotuta T."/>
            <person name="Kusano J."/>
            <person name="Kanehori K."/>
            <person name="Takahashi-Fujii A."/>
            <person name="Hara H."/>
            <person name="Tanase T.-O."/>
            <person name="Nomura Y."/>
            <person name="Togiya S."/>
            <person name="Komai F."/>
            <person name="Hara R."/>
            <person name="Takeuchi K."/>
            <person name="Arita M."/>
            <person name="Imose N."/>
            <person name="Musashino K."/>
            <person name="Yuuki H."/>
            <person name="Oshima A."/>
            <person name="Sasaki N."/>
            <person name="Aotsuka S."/>
            <person name="Yoshikawa Y."/>
            <person name="Matsunawa H."/>
            <person name="Ichihara T."/>
            <person name="Shiohata N."/>
            <person name="Sano S."/>
            <person name="Moriya S."/>
            <person name="Momiyama H."/>
            <person name="Satoh N."/>
            <person name="Takami S."/>
            <person name="Terashima Y."/>
            <person name="Suzuki O."/>
            <person name="Nakagawa S."/>
            <person name="Senoh A."/>
            <person name="Mizoguchi H."/>
            <person name="Goto Y."/>
            <person name="Shimizu F."/>
            <person name="Wakebe H."/>
            <person name="Hishigaki H."/>
            <person name="Watanabe T."/>
            <person name="Sugiyama A."/>
            <person name="Takemoto M."/>
            <person name="Kawakami B."/>
            <person name="Yamazaki M."/>
            <person name="Watanabe K."/>
            <person name="Kumagai A."/>
            <person name="Itakura S."/>
            <person name="Fukuzumi Y."/>
            <person name="Fujimori Y."/>
            <person name="Komiyama M."/>
            <person name="Tashiro H."/>
            <person name="Tanigami A."/>
            <person name="Fujiwara T."/>
            <person name="Ono T."/>
            <person name="Yamada K."/>
            <person name="Fujii Y."/>
            <person name="Ozaki K."/>
            <person name="Hirao M."/>
            <person name="Ohmori Y."/>
            <person name="Kawabata A."/>
            <person name="Hikiji T."/>
            <person name="Kobatake N."/>
            <person name="Inagaki H."/>
            <person name="Ikema Y."/>
            <person name="Okamoto S."/>
            <person name="Okitani R."/>
            <person name="Kawakami T."/>
            <person name="Noguchi S."/>
            <person name="Itoh T."/>
            <person name="Shigeta K."/>
            <person name="Senba T."/>
            <person name="Matsumura K."/>
            <person name="Nakajima Y."/>
            <person name="Mizuno T."/>
            <person name="Morinaga M."/>
            <person name="Sasaki M."/>
            <person name="Togashi T."/>
            <person name="Oyama M."/>
            <person name="Hata H."/>
            <person name="Watanabe M."/>
            <person name="Komatsu T."/>
            <person name="Mizushima-Sugano J."/>
            <person name="Satoh T."/>
            <person name="Shirai Y."/>
            <person name="Takahashi Y."/>
            <person name="Nakagawa K."/>
            <person name="Okumura K."/>
            <person name="Nagase T."/>
            <person name="Nomura N."/>
            <person name="Kikuchi H."/>
            <person name="Masuho Y."/>
            <person name="Yamashita R."/>
            <person name="Nakai K."/>
            <person name="Yada T."/>
            <person name="Nakamura Y."/>
            <person name="Ohara O."/>
            <person name="Isogai T."/>
            <person name="Sugano S."/>
        </authorList>
    </citation>
    <scope>NUCLEOTIDE SEQUENCE [LARGE SCALE MRNA]</scope>
    <source>
        <tissue>Amygdala</tissue>
    </source>
</reference>
<reference key="2">
    <citation type="journal article" date="2000" name="Nature">
        <title>The DNA sequence of human chromosome 21.</title>
        <authorList>
            <person name="Hattori M."/>
            <person name="Fujiyama A."/>
            <person name="Taylor T.D."/>
            <person name="Watanabe H."/>
            <person name="Yada T."/>
            <person name="Park H.-S."/>
            <person name="Toyoda A."/>
            <person name="Ishii K."/>
            <person name="Totoki Y."/>
            <person name="Choi D.-K."/>
            <person name="Groner Y."/>
            <person name="Soeda E."/>
            <person name="Ohki M."/>
            <person name="Takagi T."/>
            <person name="Sakaki Y."/>
            <person name="Taudien S."/>
            <person name="Blechschmidt K."/>
            <person name="Polley A."/>
            <person name="Menzel U."/>
            <person name="Delabar J."/>
            <person name="Kumpf K."/>
            <person name="Lehmann R."/>
            <person name="Patterson D."/>
            <person name="Reichwald K."/>
            <person name="Rump A."/>
            <person name="Schillhabel M."/>
            <person name="Schudy A."/>
            <person name="Zimmermann W."/>
            <person name="Rosenthal A."/>
            <person name="Kudoh J."/>
            <person name="Shibuya K."/>
            <person name="Kawasaki K."/>
            <person name="Asakawa S."/>
            <person name="Shintani A."/>
            <person name="Sasaki T."/>
            <person name="Nagamine K."/>
            <person name="Mitsuyama S."/>
            <person name="Antonarakis S.E."/>
            <person name="Minoshima S."/>
            <person name="Shimizu N."/>
            <person name="Nordsiek G."/>
            <person name="Hornischer K."/>
            <person name="Brandt P."/>
            <person name="Scharfe M."/>
            <person name="Schoen O."/>
            <person name="Desario A."/>
            <person name="Reichelt J."/>
            <person name="Kauer G."/>
            <person name="Bloecker H."/>
            <person name="Ramser J."/>
            <person name="Beck A."/>
            <person name="Klages S."/>
            <person name="Hennig S."/>
            <person name="Riesselmann L."/>
            <person name="Dagand E."/>
            <person name="Wehrmeyer S."/>
            <person name="Borzym K."/>
            <person name="Gardiner K."/>
            <person name="Nizetic D."/>
            <person name="Francis F."/>
            <person name="Lehrach H."/>
            <person name="Reinhardt R."/>
            <person name="Yaspo M.-L."/>
        </authorList>
    </citation>
    <scope>NUCLEOTIDE SEQUENCE [LARGE SCALE GENOMIC DNA]</scope>
</reference>
<reference key="3">
    <citation type="journal article" date="2004" name="Genome Res.">
        <title>The status, quality, and expansion of the NIH full-length cDNA project: the Mammalian Gene Collection (MGC).</title>
        <authorList>
            <consortium name="The MGC Project Team"/>
        </authorList>
    </citation>
    <scope>NUCLEOTIDE SEQUENCE [LARGE SCALE MRNA]</scope>
    <scope>VARIANT PHE-98</scope>
    <source>
        <tissue>Lung</tissue>
    </source>
</reference>
<evidence type="ECO:0000269" key="1">
    <source>
    </source>
</evidence>
<evidence type="ECO:0000305" key="2"/>
<evidence type="ECO:0000312" key="3">
    <source>
        <dbReference type="HGNC" id="HGNC:23821"/>
    </source>
</evidence>